<gene>
    <name type="primary">chiA1</name>
    <name type="synonym">chi1</name>
    <name type="ORF">AFUA_5G03760</name>
</gene>
<evidence type="ECO:0000250" key="1"/>
<evidence type="ECO:0000255" key="2"/>
<evidence type="ECO:0000255" key="3">
    <source>
        <dbReference type="PROSITE-ProRule" id="PRU01258"/>
    </source>
</evidence>
<evidence type="ECO:0000256" key="4">
    <source>
        <dbReference type="SAM" id="MobiDB-lite"/>
    </source>
</evidence>
<evidence type="ECO:0000305" key="5"/>
<sequence length="888" mass="88628">MVSSKLSFVATAVAALAPLASAFDASSRSNLAIYWGQGPNQLRLSHFCQETSLDIINIGFINYFPDMSPGHWPGSNFGNQCDGSVYVTNDGVVTKLLSGCHQIMEDIPICQAAGKKVLLSIGGAYPPDQSILSEDSAVAFATFLWGAFGPVAEGWEGPRPFGDVVVDGFDFDIEHNGGFGYATMANTFRQYFNQVPERKFYLSAAPQCIIPDAQLSDAIFNAAFDFIWIQYYNTAACSAKSFIDTSLGTFNFDAWVTVLKASASKDAKLYVGLPASETAANQGYYLTPDEVESLVSTYMDRYPDTFGGIMLWEATASENNQIDGAPYADHMKDILLHCDPSPPVTSSSAIPSSTPVTTPSPSSSAVPSSTPAVSETPSPSSSAVPSSTPVASSTPVVPGTSASSSPVSSSSAVASSTPVVPGTSASSSPVSSSSAVASSTPVVPGTSTSPSTPVIPGTSASSSPVSSSSAVASSTPVVPGTSASSSPVSSSSAVASSTPVVPGTSASSSPVSSSSAVASSTPVVPGTSVPSSTPAIPGGSSSSSEAVASSTPLVTLTLTVSPTPAPSSSESSSTDLSSSTQTDVGTAPSQPAGPSTTATATTSSSSSSTDESSTTVGSGNGNGSGSTTTTAATDSITAAPTATSSATATGATSEPVTITTIIVTSYIDICPTGFTTVTTTYTTTYCPGTNTATATATVTNPPSGPGGAGSQTTAPTVPEGWTTTVTICTQCAAKPTTVTLTLPVTETGSTSTDAVPAPPAATGEGSNPTQPSGASPTGGNGSFSEEPVPPPAVTQVSTSTEIVTLVRPTSSRPLILGTGTVHPSSTLAVKPSAKPSGQNSGSSSHVPIPPSYTQEAVSPLSTGAASRVTGLGHGLVLTVLTLSAFFVL</sequence>
<dbReference type="EC" id="3.2.1.14"/>
<dbReference type="EMBL" id="AAHF01000011">
    <property type="protein sequence ID" value="EAL85930.1"/>
    <property type="molecule type" value="Genomic_DNA"/>
</dbReference>
<dbReference type="RefSeq" id="XP_747968.1">
    <property type="nucleotide sequence ID" value="XM_742875.1"/>
</dbReference>
<dbReference type="SMR" id="Q4WEP7"/>
<dbReference type="STRING" id="330879.Q4WEP7"/>
<dbReference type="GlyCosmos" id="Q4WEP7">
    <property type="glycosylation" value="2 sites, No reported glycans"/>
</dbReference>
<dbReference type="EnsemblFungi" id="EAL85930">
    <property type="protein sequence ID" value="EAL85930"/>
    <property type="gene ID" value="AFUA_5G03760"/>
</dbReference>
<dbReference type="GeneID" id="3505591"/>
<dbReference type="KEGG" id="afm:AFUA_5G03760"/>
<dbReference type="VEuPathDB" id="FungiDB:Afu5g03760"/>
<dbReference type="eggNOG" id="KOG4701">
    <property type="taxonomic scope" value="Eukaryota"/>
</dbReference>
<dbReference type="HOGENOM" id="CLU_009107_2_0_1"/>
<dbReference type="InParanoid" id="Q4WEP7"/>
<dbReference type="OMA" id="NGPYIAM"/>
<dbReference type="OrthoDB" id="6020543at2759"/>
<dbReference type="Proteomes" id="UP000002530">
    <property type="component" value="Chromosome 5"/>
</dbReference>
<dbReference type="GO" id="GO:0005576">
    <property type="term" value="C:extracellular region"/>
    <property type="evidence" value="ECO:0000318"/>
    <property type="project" value="GO_Central"/>
</dbReference>
<dbReference type="GO" id="GO:0005886">
    <property type="term" value="C:plasma membrane"/>
    <property type="evidence" value="ECO:0007669"/>
    <property type="project" value="UniProtKB-SubCell"/>
</dbReference>
<dbReference type="GO" id="GO:0098552">
    <property type="term" value="C:side of membrane"/>
    <property type="evidence" value="ECO:0007669"/>
    <property type="project" value="UniProtKB-KW"/>
</dbReference>
<dbReference type="GO" id="GO:0008061">
    <property type="term" value="F:chitin binding"/>
    <property type="evidence" value="ECO:0007669"/>
    <property type="project" value="UniProtKB-KW"/>
</dbReference>
<dbReference type="GO" id="GO:0004568">
    <property type="term" value="F:chitinase activity"/>
    <property type="evidence" value="ECO:0000315"/>
    <property type="project" value="AspGD"/>
</dbReference>
<dbReference type="GO" id="GO:0008843">
    <property type="term" value="F:endochitinase activity"/>
    <property type="evidence" value="ECO:0007669"/>
    <property type="project" value="UniProtKB-EC"/>
</dbReference>
<dbReference type="GO" id="GO:0001896">
    <property type="term" value="P:autolysis"/>
    <property type="evidence" value="ECO:0000315"/>
    <property type="project" value="AspGD"/>
</dbReference>
<dbReference type="GO" id="GO:0006032">
    <property type="term" value="P:chitin catabolic process"/>
    <property type="evidence" value="ECO:0007669"/>
    <property type="project" value="UniProtKB-KW"/>
</dbReference>
<dbReference type="GO" id="GO:0000272">
    <property type="term" value="P:polysaccharide catabolic process"/>
    <property type="evidence" value="ECO:0007669"/>
    <property type="project" value="UniProtKB-KW"/>
</dbReference>
<dbReference type="CDD" id="cd02877">
    <property type="entry name" value="GH18_hevamine_XipI_class_III"/>
    <property type="match status" value="1"/>
</dbReference>
<dbReference type="FunFam" id="3.20.20.80:FF:000150">
    <property type="entry name" value="Class III chitinase ChiA1"/>
    <property type="match status" value="1"/>
</dbReference>
<dbReference type="Gene3D" id="3.20.20.80">
    <property type="entry name" value="Glycosidases"/>
    <property type="match status" value="1"/>
</dbReference>
<dbReference type="InterPro" id="IPR045321">
    <property type="entry name" value="Cts1-like"/>
</dbReference>
<dbReference type="InterPro" id="IPR001223">
    <property type="entry name" value="Glyco_hydro18_cat"/>
</dbReference>
<dbReference type="InterPro" id="IPR001579">
    <property type="entry name" value="Glyco_hydro_18_chit_AS"/>
</dbReference>
<dbReference type="InterPro" id="IPR017853">
    <property type="entry name" value="Glycoside_hydrolase_SF"/>
</dbReference>
<dbReference type="InterPro" id="IPR050542">
    <property type="entry name" value="Glycosyl_Hydrlase18_Chitinase"/>
</dbReference>
<dbReference type="PANTHER" id="PTHR45708">
    <property type="entry name" value="ENDOCHITINASE"/>
    <property type="match status" value="1"/>
</dbReference>
<dbReference type="PANTHER" id="PTHR45708:SF47">
    <property type="entry name" value="ENDOCHITINASE A"/>
    <property type="match status" value="1"/>
</dbReference>
<dbReference type="Pfam" id="PF00704">
    <property type="entry name" value="Glyco_hydro_18"/>
    <property type="match status" value="1"/>
</dbReference>
<dbReference type="SUPFAM" id="SSF51445">
    <property type="entry name" value="(Trans)glycosidases"/>
    <property type="match status" value="1"/>
</dbReference>
<dbReference type="PROSITE" id="PS01095">
    <property type="entry name" value="GH18_1"/>
    <property type="match status" value="1"/>
</dbReference>
<dbReference type="PROSITE" id="PS51910">
    <property type="entry name" value="GH18_2"/>
    <property type="match status" value="1"/>
</dbReference>
<comment type="function">
    <text evidence="1">GPI-anchored chitinase involved in the degradation of chitin, a component of the cell walls of fungi and exoskeletal elements of some animals (including worms and arthropods). Required to reshape the cell wall at the sites where cell wall remodeling and/or cell wall maturation actively take place such as sites of conidia formation (By similarity).</text>
</comment>
<comment type="catalytic activity">
    <reaction>
        <text>Random endo-hydrolysis of N-acetyl-beta-D-glucosaminide (1-&gt;4)-beta-linkages in chitin and chitodextrins.</text>
        <dbReference type="EC" id="3.2.1.14"/>
    </reaction>
</comment>
<comment type="activity regulation">
    <text evidence="1">The cyclic peptide natural product argifin acts as a specific inhibitor.</text>
</comment>
<comment type="subcellular location">
    <subcellularLocation>
        <location evidence="1">Cell membrane</location>
        <topology evidence="1">Lipid-anchor</topology>
        <topology evidence="1">GPI-anchor</topology>
    </subcellularLocation>
    <subcellularLocation>
        <location evidence="1">Secreted</location>
        <location evidence="1">Cell wall</location>
    </subcellularLocation>
</comment>
<comment type="similarity">
    <text evidence="5">Belongs to the glycosyl hydrolase 18 family. Chitinase class III subfamily.</text>
</comment>
<reference key="1">
    <citation type="journal article" date="2005" name="Nature">
        <title>Genomic sequence of the pathogenic and allergenic filamentous fungus Aspergillus fumigatus.</title>
        <authorList>
            <person name="Nierman W.C."/>
            <person name="Pain A."/>
            <person name="Anderson M.J."/>
            <person name="Wortman J.R."/>
            <person name="Kim H.S."/>
            <person name="Arroyo J."/>
            <person name="Berriman M."/>
            <person name="Abe K."/>
            <person name="Archer D.B."/>
            <person name="Bermejo C."/>
            <person name="Bennett J.W."/>
            <person name="Bowyer P."/>
            <person name="Chen D."/>
            <person name="Collins M."/>
            <person name="Coulsen R."/>
            <person name="Davies R."/>
            <person name="Dyer P.S."/>
            <person name="Farman M.L."/>
            <person name="Fedorova N."/>
            <person name="Fedorova N.D."/>
            <person name="Feldblyum T.V."/>
            <person name="Fischer R."/>
            <person name="Fosker N."/>
            <person name="Fraser A."/>
            <person name="Garcia J.L."/>
            <person name="Garcia M.J."/>
            <person name="Goble A."/>
            <person name="Goldman G.H."/>
            <person name="Gomi K."/>
            <person name="Griffith-Jones S."/>
            <person name="Gwilliam R."/>
            <person name="Haas B.J."/>
            <person name="Haas H."/>
            <person name="Harris D.E."/>
            <person name="Horiuchi H."/>
            <person name="Huang J."/>
            <person name="Humphray S."/>
            <person name="Jimenez J."/>
            <person name="Keller N."/>
            <person name="Khouri H."/>
            <person name="Kitamoto K."/>
            <person name="Kobayashi T."/>
            <person name="Konzack S."/>
            <person name="Kulkarni R."/>
            <person name="Kumagai T."/>
            <person name="Lafton A."/>
            <person name="Latge J.-P."/>
            <person name="Li W."/>
            <person name="Lord A."/>
            <person name="Lu C."/>
            <person name="Majoros W.H."/>
            <person name="May G.S."/>
            <person name="Miller B.L."/>
            <person name="Mohamoud Y."/>
            <person name="Molina M."/>
            <person name="Monod M."/>
            <person name="Mouyna I."/>
            <person name="Mulligan S."/>
            <person name="Murphy L.D."/>
            <person name="O'Neil S."/>
            <person name="Paulsen I."/>
            <person name="Penalva M.A."/>
            <person name="Pertea M."/>
            <person name="Price C."/>
            <person name="Pritchard B.L."/>
            <person name="Quail M.A."/>
            <person name="Rabbinowitsch E."/>
            <person name="Rawlins N."/>
            <person name="Rajandream M.A."/>
            <person name="Reichard U."/>
            <person name="Renauld H."/>
            <person name="Robson G.D."/>
            <person name="Rodriguez de Cordoba S."/>
            <person name="Rodriguez-Pena J.M."/>
            <person name="Ronning C.M."/>
            <person name="Rutter S."/>
            <person name="Salzberg S.L."/>
            <person name="Sanchez M."/>
            <person name="Sanchez-Ferrero J.C."/>
            <person name="Saunders D."/>
            <person name="Seeger K."/>
            <person name="Squares R."/>
            <person name="Squares S."/>
            <person name="Takeuchi M."/>
            <person name="Tekaia F."/>
            <person name="Turner G."/>
            <person name="Vazquez de Aldana C.R."/>
            <person name="Weidman J."/>
            <person name="White O."/>
            <person name="Woodward J.R."/>
            <person name="Yu J.-H."/>
            <person name="Fraser C.M."/>
            <person name="Galagan J.E."/>
            <person name="Asai K."/>
            <person name="Machida M."/>
            <person name="Hall N."/>
            <person name="Barrell B.G."/>
            <person name="Denning D.W."/>
        </authorList>
    </citation>
    <scope>NUCLEOTIDE SEQUENCE [LARGE SCALE GENOMIC DNA]</scope>
    <source>
        <strain>ATCC MYA-4609 / CBS 101355 / FGSC A1100 / Af293</strain>
    </source>
</reference>
<protein>
    <recommendedName>
        <fullName>Endochitinase A1</fullName>
        <ecNumber>3.2.1.14</ecNumber>
    </recommendedName>
    <alternativeName>
        <fullName>Chitinase A1</fullName>
    </alternativeName>
</protein>
<accession>Q4WEP7</accession>
<keyword id="KW-0119">Carbohydrate metabolism</keyword>
<keyword id="KW-1003">Cell membrane</keyword>
<keyword id="KW-0134">Cell wall</keyword>
<keyword id="KW-0146">Chitin degradation</keyword>
<keyword id="KW-0147">Chitin-binding</keyword>
<keyword id="KW-0325">Glycoprotein</keyword>
<keyword id="KW-0326">Glycosidase</keyword>
<keyword id="KW-0336">GPI-anchor</keyword>
<keyword id="KW-0378">Hydrolase</keyword>
<keyword id="KW-0449">Lipoprotein</keyword>
<keyword id="KW-0472">Membrane</keyword>
<keyword id="KW-0624">Polysaccharide degradation</keyword>
<keyword id="KW-1185">Reference proteome</keyword>
<keyword id="KW-0964">Secreted</keyword>
<keyword id="KW-0732">Signal</keyword>
<name>CHIA1_ASPFU</name>
<feature type="signal peptide" evidence="2">
    <location>
        <begin position="1"/>
        <end position="22"/>
    </location>
</feature>
<feature type="chain" id="PRO_0000429816" description="Endochitinase A1">
    <location>
        <begin position="23"/>
        <end position="863"/>
    </location>
</feature>
<feature type="propeptide" id="PRO_0000429817" description="Removed in mature form" evidence="2">
    <location>
        <begin position="864"/>
        <end position="888"/>
    </location>
</feature>
<feature type="domain" description="GH18" evidence="3">
    <location>
        <begin position="29"/>
        <end position="338"/>
    </location>
</feature>
<feature type="region of interest" description="Disordered" evidence="4">
    <location>
        <begin position="338"/>
        <end position="631"/>
    </location>
</feature>
<feature type="region of interest" description="Disordered" evidence="4">
    <location>
        <begin position="743"/>
        <end position="799"/>
    </location>
</feature>
<feature type="region of interest" description="Disordered" evidence="4">
    <location>
        <begin position="813"/>
        <end position="855"/>
    </location>
</feature>
<feature type="compositionally biased region" description="Low complexity" evidence="4">
    <location>
        <begin position="344"/>
        <end position="617"/>
    </location>
</feature>
<feature type="compositionally biased region" description="Polar residues" evidence="4">
    <location>
        <begin position="764"/>
        <end position="775"/>
    </location>
</feature>
<feature type="compositionally biased region" description="Polar residues" evidence="4">
    <location>
        <begin position="835"/>
        <end position="855"/>
    </location>
</feature>
<feature type="active site" description="Proton donor" evidence="3">
    <location>
        <position position="174"/>
    </location>
</feature>
<feature type="lipid moiety-binding region" description="GPI-anchor amidated glycine" evidence="2">
    <location>
        <position position="863"/>
    </location>
</feature>
<feature type="glycosylation site" description="N-linked (GlcNAc...) asparagine" evidence="2">
    <location>
        <position position="622"/>
    </location>
</feature>
<feature type="glycosylation site" description="N-linked (GlcNAc...) asparagine" evidence="2">
    <location>
        <position position="780"/>
    </location>
</feature>
<organism>
    <name type="scientific">Aspergillus fumigatus (strain ATCC MYA-4609 / CBS 101355 / FGSC A1100 / Af293)</name>
    <name type="common">Neosartorya fumigata</name>
    <dbReference type="NCBI Taxonomy" id="330879"/>
    <lineage>
        <taxon>Eukaryota</taxon>
        <taxon>Fungi</taxon>
        <taxon>Dikarya</taxon>
        <taxon>Ascomycota</taxon>
        <taxon>Pezizomycotina</taxon>
        <taxon>Eurotiomycetes</taxon>
        <taxon>Eurotiomycetidae</taxon>
        <taxon>Eurotiales</taxon>
        <taxon>Aspergillaceae</taxon>
        <taxon>Aspergillus</taxon>
        <taxon>Aspergillus subgen. Fumigati</taxon>
    </lineage>
</organism>
<proteinExistence type="inferred from homology"/>